<comment type="function">
    <text evidence="1">Flagellar protein that affects chemotactic events.</text>
</comment>
<comment type="subcellular location">
    <subcellularLocation>
        <location evidence="1">Cell membrane</location>
        <topology evidence="1">Peripheral membrane protein</topology>
        <orientation evidence="1">Cytoplasmic side</orientation>
    </subcellularLocation>
</comment>
<comment type="similarity">
    <text evidence="2">Belongs to the FliJ family.</text>
</comment>
<gene>
    <name type="primary">fliJ</name>
    <name type="ordered locus">bbp_072</name>
</gene>
<sequence length="155" mass="18854">MYKKKRCFTLLKYLDVKSNYHIVLNLKKILSGIIQVKAQLDILMSYQCEYLKCLDQELKFYISGTRLAHYYNFIAFLIDGVNKQNDTMCKLYKQYNEYIYLWKKKQKKIKMWNNINSRLLLNRFKLSQLDDQDLLDSCCTYKYLLKNDREDTDYV</sequence>
<reference key="1">
    <citation type="journal article" date="2003" name="Proc. Natl. Acad. Sci. U.S.A.">
        <title>Reductive genome evolution in Buchnera aphidicola.</title>
        <authorList>
            <person name="van Ham R.C.H.J."/>
            <person name="Kamerbeek J."/>
            <person name="Palacios C."/>
            <person name="Rausell C."/>
            <person name="Abascal F."/>
            <person name="Bastolla U."/>
            <person name="Fernandez J.M."/>
            <person name="Jimenez L."/>
            <person name="Postigo M."/>
            <person name="Silva F.J."/>
            <person name="Tamames J."/>
            <person name="Viguera E."/>
            <person name="Latorre A."/>
            <person name="Valencia A."/>
            <person name="Moran F."/>
            <person name="Moya A."/>
        </authorList>
    </citation>
    <scope>NUCLEOTIDE SEQUENCE [LARGE SCALE GENOMIC DNA]</scope>
    <source>
        <strain>Bp</strain>
    </source>
</reference>
<dbReference type="EMBL" id="AE016826">
    <property type="protein sequence ID" value="AAO26808.1"/>
    <property type="molecule type" value="Genomic_DNA"/>
</dbReference>
<dbReference type="RefSeq" id="WP_011091209.1">
    <property type="nucleotide sequence ID" value="NC_004545.1"/>
</dbReference>
<dbReference type="SMR" id="Q89AZ6"/>
<dbReference type="STRING" id="224915.bbp_072"/>
<dbReference type="KEGG" id="bab:bbp_072"/>
<dbReference type="HOGENOM" id="CLU_1764545_0_0_6"/>
<dbReference type="OrthoDB" id="6465096at2"/>
<dbReference type="Proteomes" id="UP000000601">
    <property type="component" value="Chromosome"/>
</dbReference>
<dbReference type="GO" id="GO:0005886">
    <property type="term" value="C:plasma membrane"/>
    <property type="evidence" value="ECO:0007669"/>
    <property type="project" value="UniProtKB-SubCell"/>
</dbReference>
<dbReference type="GO" id="GO:0044781">
    <property type="term" value="P:bacterial-type flagellum organization"/>
    <property type="evidence" value="ECO:0007669"/>
    <property type="project" value="UniProtKB-KW"/>
</dbReference>
<dbReference type="GO" id="GO:0006935">
    <property type="term" value="P:chemotaxis"/>
    <property type="evidence" value="ECO:0007669"/>
    <property type="project" value="UniProtKB-KW"/>
</dbReference>
<dbReference type="GO" id="GO:0015031">
    <property type="term" value="P:protein transport"/>
    <property type="evidence" value="ECO:0007669"/>
    <property type="project" value="UniProtKB-KW"/>
</dbReference>
<dbReference type="Gene3D" id="1.10.287.1700">
    <property type="match status" value="1"/>
</dbReference>
<dbReference type="InterPro" id="IPR053716">
    <property type="entry name" value="Flag_assembly_chemotaxis_eff"/>
</dbReference>
<evidence type="ECO:0000250" key="1"/>
<evidence type="ECO:0000305" key="2"/>
<feature type="chain" id="PRO_0000180899" description="Flagellar FliJ protein">
    <location>
        <begin position="1"/>
        <end position="155"/>
    </location>
</feature>
<keyword id="KW-1005">Bacterial flagellum biogenesis</keyword>
<keyword id="KW-1006">Bacterial flagellum protein export</keyword>
<keyword id="KW-1003">Cell membrane</keyword>
<keyword id="KW-0145">Chemotaxis</keyword>
<keyword id="KW-0472">Membrane</keyword>
<keyword id="KW-0653">Protein transport</keyword>
<keyword id="KW-1185">Reference proteome</keyword>
<keyword id="KW-0813">Transport</keyword>
<accession>Q89AZ6</accession>
<organism>
    <name type="scientific">Buchnera aphidicola subsp. Baizongia pistaciae (strain Bp)</name>
    <dbReference type="NCBI Taxonomy" id="224915"/>
    <lineage>
        <taxon>Bacteria</taxon>
        <taxon>Pseudomonadati</taxon>
        <taxon>Pseudomonadota</taxon>
        <taxon>Gammaproteobacteria</taxon>
        <taxon>Enterobacterales</taxon>
        <taxon>Erwiniaceae</taxon>
        <taxon>Buchnera</taxon>
    </lineage>
</organism>
<proteinExistence type="inferred from homology"/>
<protein>
    <recommendedName>
        <fullName>Flagellar FliJ protein</fullName>
    </recommendedName>
</protein>
<name>FLIJ_BUCBP</name>